<gene>
    <name type="primary">ptlE</name>
    <name type="ordered locus">BPP4313</name>
</gene>
<evidence type="ECO:0000255" key="1"/>
<evidence type="ECO:0000305" key="2"/>
<proteinExistence type="inferred from homology"/>
<reference key="1">
    <citation type="journal article" date="2003" name="Nat. Genet.">
        <title>Comparative analysis of the genome sequences of Bordetella pertussis, Bordetella parapertussis and Bordetella bronchiseptica.</title>
        <authorList>
            <person name="Parkhill J."/>
            <person name="Sebaihia M."/>
            <person name="Preston A."/>
            <person name="Murphy L.D."/>
            <person name="Thomson N.R."/>
            <person name="Harris D.E."/>
            <person name="Holden M.T.G."/>
            <person name="Churcher C.M."/>
            <person name="Bentley S.D."/>
            <person name="Mungall K.L."/>
            <person name="Cerdeno-Tarraga A.-M."/>
            <person name="Temple L."/>
            <person name="James K.D."/>
            <person name="Harris B."/>
            <person name="Quail M.A."/>
            <person name="Achtman M."/>
            <person name="Atkin R."/>
            <person name="Baker S."/>
            <person name="Basham D."/>
            <person name="Bason N."/>
            <person name="Cherevach I."/>
            <person name="Chillingworth T."/>
            <person name="Collins M."/>
            <person name="Cronin A."/>
            <person name="Davis P."/>
            <person name="Doggett J."/>
            <person name="Feltwell T."/>
            <person name="Goble A."/>
            <person name="Hamlin N."/>
            <person name="Hauser H."/>
            <person name="Holroyd S."/>
            <person name="Jagels K."/>
            <person name="Leather S."/>
            <person name="Moule S."/>
            <person name="Norberczak H."/>
            <person name="O'Neil S."/>
            <person name="Ormond D."/>
            <person name="Price C."/>
            <person name="Rabbinowitsch E."/>
            <person name="Rutter S."/>
            <person name="Sanders M."/>
            <person name="Saunders D."/>
            <person name="Seeger K."/>
            <person name="Sharp S."/>
            <person name="Simmonds M."/>
            <person name="Skelton J."/>
            <person name="Squares R."/>
            <person name="Squares S."/>
            <person name="Stevens K."/>
            <person name="Unwin L."/>
            <person name="Whitehead S."/>
            <person name="Barrell B.G."/>
            <person name="Maskell D.J."/>
        </authorList>
    </citation>
    <scope>NUCLEOTIDE SEQUENCE [LARGE SCALE GENOMIC DNA]</scope>
    <source>
        <strain>12822 / ATCC BAA-587 / NCTC 13253</strain>
    </source>
</reference>
<reference key="2">
    <citation type="journal article" date="1987" name="J. Bacteriol.">
        <title>Bordetella parapertussis and Bordetella bronchiseptica contain transcriptionally silent pertussis toxin genes.</title>
        <authorList>
            <person name="Arico B."/>
            <person name="Rappuoli R."/>
        </authorList>
    </citation>
    <scope>TRANSCRIPTIONAL SILENCING</scope>
    <source>
        <strain>ATCC 9305</strain>
    </source>
</reference>
<reference key="3">
    <citation type="journal article" date="1996" name="Infect. Immun.">
        <title>Analysis of proteins encoded by the ptx and ptl genes of Bordetella bronchiseptica and Bordetella parapertussis.</title>
        <authorList>
            <person name="Hausman S.Z."/>
            <person name="Cherry J.D."/>
            <person name="Heininger U."/>
            <person name="Wirsing von Koenig C.H."/>
            <person name="Burns D.L."/>
        </authorList>
    </citation>
    <scope>IN VITRO EXPRESSION FROM A B.PERTUSSIS PROMOTER</scope>
    <source>
        <strain>10978</strain>
        <strain>13449</strain>
    </source>
</reference>
<protein>
    <recommendedName>
        <fullName>Type IV secretion system protein PtlE homolog</fullName>
    </recommendedName>
</protein>
<accession>Q7W2U0</accession>
<dbReference type="EMBL" id="BX640436">
    <property type="protein sequence ID" value="CAE39592.1"/>
    <property type="molecule type" value="Genomic_DNA"/>
</dbReference>
<dbReference type="RefSeq" id="WP_010929498.1">
    <property type="nucleotide sequence ID" value="NC_002928.3"/>
</dbReference>
<dbReference type="SMR" id="Q7W2U0"/>
<dbReference type="GeneID" id="69599982"/>
<dbReference type="GeneID" id="93206112"/>
<dbReference type="KEGG" id="bpa:BPP4313"/>
<dbReference type="HOGENOM" id="CLU_068461_1_1_4"/>
<dbReference type="Proteomes" id="UP000001421">
    <property type="component" value="Chromosome"/>
</dbReference>
<dbReference type="GO" id="GO:0005886">
    <property type="term" value="C:plasma membrane"/>
    <property type="evidence" value="ECO:0007669"/>
    <property type="project" value="UniProtKB-SubCell"/>
</dbReference>
<dbReference type="GO" id="GO:0030255">
    <property type="term" value="P:protein secretion by the type IV secretion system"/>
    <property type="evidence" value="ECO:0007669"/>
    <property type="project" value="InterPro"/>
</dbReference>
<dbReference type="CDD" id="cd16424">
    <property type="entry name" value="VirB8"/>
    <property type="match status" value="1"/>
</dbReference>
<dbReference type="Gene3D" id="3.10.450.230">
    <property type="entry name" value="VirB8 protein"/>
    <property type="match status" value="1"/>
</dbReference>
<dbReference type="InterPro" id="IPR032710">
    <property type="entry name" value="NTF2-like_dom_sf"/>
</dbReference>
<dbReference type="InterPro" id="IPR007430">
    <property type="entry name" value="VirB8"/>
</dbReference>
<dbReference type="InterPro" id="IPR026264">
    <property type="entry name" value="VirB8/PtlE"/>
</dbReference>
<dbReference type="Pfam" id="PF04335">
    <property type="entry name" value="VirB8"/>
    <property type="match status" value="1"/>
</dbReference>
<dbReference type="PIRSF" id="PIRSF003299">
    <property type="entry name" value="VirB8_PtlE"/>
    <property type="match status" value="1"/>
</dbReference>
<dbReference type="SUPFAM" id="SSF54427">
    <property type="entry name" value="NTF2-like"/>
    <property type="match status" value="1"/>
</dbReference>
<sequence>MPDPRPLTPDQTHGRGHAEAAVDWEASRLYRLAQSERRAWTVAWAALAVTALSLIAIATMLPLKTTIPYLIEVEKSSGAASVVTQFEPRDFTPDTLMNQYWLTRYVAARERYDWHTIQHDYDYVRLLSAPAVRHDYETSYEAPDAPDRKYGAGTTLAVKILSAIDHGKGVGTVRFVRTRRDADGQGAAESSIWVATVAFAYDQPRALTQAQRWLNPLGFAVTSYRVDAEAGQP</sequence>
<name>PTLE_BORPA</name>
<comment type="subcellular location">
    <subcellularLocation>
        <location evidence="2">Cell inner membrane</location>
        <topology evidence="2">Single-pass membrane protein</topology>
    </subcellularLocation>
</comment>
<comment type="miscellaneous">
    <text>B.parapertussis strain 10978 harboring a functional ptx-ptl promoter from B.pertussis produces the PtlE protein in a stable form. Is also able, but less efficiently, to produce and secrete the pertussis toxin (PTX).</text>
</comment>
<comment type="similarity">
    <text evidence="2">Belongs to the virB8 family.</text>
</comment>
<comment type="caution">
    <text evidence="2">B.parapertussis and B.bronchiseptica seem not to produce the pertussis toxin (S1, S2, S4, S5 and S3) and ptl proteins (PtlA, PtlB, PtlC, PtlD, PtlE, PtlF, PtlG, PtlH and PtlI) in vivo due to changes in the promoter region of the ptx-ptl operon. However, it is possible that their promoter is active under certain, as-yet-undefined conditions and that B.parapertussis and B.bronchiseptica are therefore capable of producing these proteins.</text>
</comment>
<keyword id="KW-0997">Cell inner membrane</keyword>
<keyword id="KW-1003">Cell membrane</keyword>
<keyword id="KW-0472">Membrane</keyword>
<keyword id="KW-0812">Transmembrane</keyword>
<keyword id="KW-1133">Transmembrane helix</keyword>
<organism>
    <name type="scientific">Bordetella parapertussis (strain 12822 / ATCC BAA-587 / NCTC 13253)</name>
    <dbReference type="NCBI Taxonomy" id="257311"/>
    <lineage>
        <taxon>Bacteria</taxon>
        <taxon>Pseudomonadati</taxon>
        <taxon>Pseudomonadota</taxon>
        <taxon>Betaproteobacteria</taxon>
        <taxon>Burkholderiales</taxon>
        <taxon>Alcaligenaceae</taxon>
        <taxon>Bordetella</taxon>
    </lineage>
</organism>
<feature type="chain" id="PRO_0000287412" description="Type IV secretion system protein PtlE homolog">
    <location>
        <begin position="1"/>
        <end position="233"/>
    </location>
</feature>
<feature type="transmembrane region" description="Helical" evidence="1">
    <location>
        <begin position="42"/>
        <end position="62"/>
    </location>
</feature>